<proteinExistence type="evidence at protein level"/>
<name>MRCKA_MOUSE</name>
<accession>Q3UU96</accession>
<accession>B2RY49</accession>
<accession>Q4V9U7</accession>
<accession>Q6ZQA9</accession>
<accession>Q8R495</accession>
<comment type="function">
    <text evidence="3 13">Serine/threonine-protein kinase which is an important downstream effector of CDC42 and plays a role in the regulation of cytoskeleton reorganization and cell migration. Regulates actin cytoskeletal reorganization via phosphorylation of PPP1R12C and MYL9/MLC2. In concert with MYO18A and LRP35A, is involved in modulating lamellar actomyosin retrograde flow that is crucial to cell protrusion and migration. Phosphorylates: PPP1R12A and LIMK2. May play a role in TFRC-mediated iron uptake (By similarity). In concert with FAM89B/LRAP25 mediates the targeting of LIMK1 to the lamellipodium resulting in its activation and subsequent phosphorylation of CFL1 which is important for lamellipodial F-actin regulation (PubMed:25107909). Triggers the formation of an extrusion apical actin ring required for epithelial extrusion of apoptotic cells (By similarity).</text>
</comment>
<comment type="catalytic activity">
    <reaction>
        <text>L-seryl-[protein] + ATP = O-phospho-L-seryl-[protein] + ADP + H(+)</text>
        <dbReference type="Rhea" id="RHEA:17989"/>
        <dbReference type="Rhea" id="RHEA-COMP:9863"/>
        <dbReference type="Rhea" id="RHEA-COMP:11604"/>
        <dbReference type="ChEBI" id="CHEBI:15378"/>
        <dbReference type="ChEBI" id="CHEBI:29999"/>
        <dbReference type="ChEBI" id="CHEBI:30616"/>
        <dbReference type="ChEBI" id="CHEBI:83421"/>
        <dbReference type="ChEBI" id="CHEBI:456216"/>
        <dbReference type="EC" id="2.7.11.1"/>
    </reaction>
</comment>
<comment type="catalytic activity">
    <reaction>
        <text>L-threonyl-[protein] + ATP = O-phospho-L-threonyl-[protein] + ADP + H(+)</text>
        <dbReference type="Rhea" id="RHEA:46608"/>
        <dbReference type="Rhea" id="RHEA-COMP:11060"/>
        <dbReference type="Rhea" id="RHEA-COMP:11605"/>
        <dbReference type="ChEBI" id="CHEBI:15378"/>
        <dbReference type="ChEBI" id="CHEBI:30013"/>
        <dbReference type="ChEBI" id="CHEBI:30616"/>
        <dbReference type="ChEBI" id="CHEBI:61977"/>
        <dbReference type="ChEBI" id="CHEBI:456216"/>
        <dbReference type="EC" id="2.7.11.1"/>
    </reaction>
</comment>
<comment type="cofactor">
    <cofactor evidence="1">
        <name>Mg(2+)</name>
        <dbReference type="ChEBI" id="CHEBI:18420"/>
    </cofactor>
</comment>
<comment type="activity regulation">
    <text evidence="1">Maintained in an inactive, closed conformation by an interaction between the kinase domain and the negative autoregulatory C-terminal coiled-coil region. Agonist binding to the phorbol ester binding site disrupts this, releasing the kinase domain to allow N-terminus-mediated dimerization and kinase activation by transautophosphorylation. Inhibited by chelerythrine chloride (By similarity).</text>
</comment>
<comment type="subunit">
    <text evidence="2 13">Homodimer and homotetramer via the coiled coil regions. Interacts tightly with GTP-bound but not GDP-bound CDC42. Forms a tripartite complex with MYO18A and LRP35A with the latter acting as an adapter connecting CDC42BPA and MYO18A. LRP35A binding results in activation of CDC42BPA by abolition of its negative autoregulation. Interacts with LURAP1 (By similarity). Interacts (via AGC-kinase C-terminal domain) with FAM89B/LRAP25 (via LRR repeat). Forms a tripartite complex with FAM89B/LRAP25 and LIMK1 (PubMed:25107909).</text>
</comment>
<comment type="subcellular location">
    <subcellularLocation>
        <location evidence="1">Cytoplasm</location>
    </subcellularLocation>
    <subcellularLocation>
        <location evidence="13">Cell projection</location>
        <location evidence="13">Lamellipodium</location>
    </subcellularLocation>
    <text evidence="2 13">Displays a dispersed punctate distribution and concentrates along the cell periphery, especially at the leading edge and cell-cell junction. This concentration is PH-domain dependent (By similarity). Localizes in the lamellipodium in a FAM89B/LRAP25-dependent manner (PubMed:25107909).</text>
</comment>
<comment type="alternative products">
    <event type="alternative splicing"/>
    <isoform>
        <id>Q3UU96-1</id>
        <name>1</name>
        <sequence type="displayed"/>
    </isoform>
    <isoform>
        <id>Q3UU96-2</id>
        <name>2</name>
        <sequence type="described" ref="VSP_023679 VSP_023680"/>
    </isoform>
</comment>
<comment type="PTM">
    <text evidence="3">Proteolytically cleaved by caspases upon apoptosis induction. The cleavage at Asp-478 by CASP3 increases its kinase activity (in vitro).</text>
</comment>
<comment type="similarity">
    <text evidence="15">Belongs to the protein kinase superfamily. AGC Ser/Thr protein kinase family. DMPK subfamily.</text>
</comment>
<dbReference type="EC" id="2.7.11.1"/>
<dbReference type="EMBL" id="AC125380">
    <property type="status" value="NOT_ANNOTATED_CDS"/>
    <property type="molecule type" value="Genomic_DNA"/>
</dbReference>
<dbReference type="EMBL" id="AC132436">
    <property type="status" value="NOT_ANNOTATED_CDS"/>
    <property type="molecule type" value="Genomic_DNA"/>
</dbReference>
<dbReference type="EMBL" id="BC096679">
    <property type="protein sequence ID" value="AAH96679.1"/>
    <property type="molecule type" value="mRNA"/>
</dbReference>
<dbReference type="EMBL" id="BC158095">
    <property type="protein sequence ID" value="AAI58096.1"/>
    <property type="molecule type" value="mRNA"/>
</dbReference>
<dbReference type="EMBL" id="AK138649">
    <property type="protein sequence ID" value="BAE23731.1"/>
    <property type="molecule type" value="mRNA"/>
</dbReference>
<dbReference type="EMBL" id="AF492452">
    <property type="protein sequence ID" value="AAM10976.1"/>
    <property type="molecule type" value="mRNA"/>
</dbReference>
<dbReference type="EMBL" id="AK129148">
    <property type="protein sequence ID" value="BAC97958.1"/>
    <property type="molecule type" value="mRNA"/>
</dbReference>
<dbReference type="CCDS" id="CCDS83649.1">
    <molecule id="Q3UU96-1"/>
</dbReference>
<dbReference type="RefSeq" id="NP_001333733.1">
    <molecule id="Q3UU96-1"/>
    <property type="nucleotide sequence ID" value="NM_001346804.1"/>
</dbReference>
<dbReference type="SMR" id="Q3UU96"/>
<dbReference type="BioGRID" id="230550">
    <property type="interactions" value="7"/>
</dbReference>
<dbReference type="CORUM" id="Q3UU96"/>
<dbReference type="FunCoup" id="Q3UU96">
    <property type="interactions" value="1405"/>
</dbReference>
<dbReference type="IntAct" id="Q3UU96">
    <property type="interactions" value="2"/>
</dbReference>
<dbReference type="MINT" id="Q3UU96"/>
<dbReference type="STRING" id="10090.ENSMUSP00000106746"/>
<dbReference type="GlyGen" id="Q3UU96">
    <property type="glycosylation" value="3 sites, 1 N-linked glycan (1 site), 1 O-linked glycan (2 sites)"/>
</dbReference>
<dbReference type="iPTMnet" id="Q3UU96"/>
<dbReference type="PhosphoSitePlus" id="Q3UU96"/>
<dbReference type="jPOST" id="Q3UU96"/>
<dbReference type="PaxDb" id="10090-ENSMUSP00000106746"/>
<dbReference type="PeptideAtlas" id="Q3UU96"/>
<dbReference type="ProteomicsDB" id="290054">
    <molecule id="Q3UU96-1"/>
</dbReference>
<dbReference type="ProteomicsDB" id="290055">
    <molecule id="Q3UU96-2"/>
</dbReference>
<dbReference type="Pumba" id="Q3UU96"/>
<dbReference type="Antibodypedia" id="34655">
    <property type="antibodies" value="243 antibodies from 35 providers"/>
</dbReference>
<dbReference type="DNASU" id="226751"/>
<dbReference type="Ensembl" id="ENSMUST00000097450.10">
    <molecule id="Q3UU96-1"/>
    <property type="protein sequence ID" value="ENSMUSP00000095059.4"/>
    <property type="gene ID" value="ENSMUSG00000026490.19"/>
</dbReference>
<dbReference type="GeneID" id="226751"/>
<dbReference type="KEGG" id="mmu:226751"/>
<dbReference type="UCSC" id="uc007dvu.2">
    <molecule id="Q3UU96-1"/>
    <property type="organism name" value="mouse"/>
</dbReference>
<dbReference type="AGR" id="MGI:2441841"/>
<dbReference type="CTD" id="8476"/>
<dbReference type="MGI" id="MGI:2441841">
    <property type="gene designation" value="Cdc42bpa"/>
</dbReference>
<dbReference type="VEuPathDB" id="HostDB:ENSMUSG00000026490"/>
<dbReference type="eggNOG" id="KOG0612">
    <property type="taxonomic scope" value="Eukaryota"/>
</dbReference>
<dbReference type="GeneTree" id="ENSGT01030000234517"/>
<dbReference type="InParanoid" id="Q3UU96"/>
<dbReference type="PhylomeDB" id="Q3UU96"/>
<dbReference type="Reactome" id="R-MMU-9013149">
    <property type="pathway name" value="RAC1 GTPase cycle"/>
</dbReference>
<dbReference type="Reactome" id="R-MMU-9013406">
    <property type="pathway name" value="RHOQ GTPase cycle"/>
</dbReference>
<dbReference type="BioGRID-ORCS" id="226751">
    <property type="hits" value="0 hits in 82 CRISPR screens"/>
</dbReference>
<dbReference type="CD-CODE" id="CE726F99">
    <property type="entry name" value="Postsynaptic density"/>
</dbReference>
<dbReference type="ChiTaRS" id="Cdc42bpa">
    <property type="organism name" value="mouse"/>
</dbReference>
<dbReference type="PRO" id="PR:Q3UU96"/>
<dbReference type="Proteomes" id="UP000000589">
    <property type="component" value="Chromosome 1"/>
</dbReference>
<dbReference type="RNAct" id="Q3UU96">
    <property type="molecule type" value="protein"/>
</dbReference>
<dbReference type="Bgee" id="ENSMUSG00000026490">
    <property type="expression patterns" value="Expressed in animal zygote and 231 other cell types or tissues"/>
</dbReference>
<dbReference type="ExpressionAtlas" id="Q3UU96">
    <property type="expression patterns" value="baseline and differential"/>
</dbReference>
<dbReference type="GO" id="GO:0005737">
    <property type="term" value="C:cytoplasm"/>
    <property type="evidence" value="ECO:0007669"/>
    <property type="project" value="UniProtKB-SubCell"/>
</dbReference>
<dbReference type="GO" id="GO:0030027">
    <property type="term" value="C:lamellipodium"/>
    <property type="evidence" value="ECO:0000314"/>
    <property type="project" value="UniProtKB"/>
</dbReference>
<dbReference type="GO" id="GO:0005524">
    <property type="term" value="F:ATP binding"/>
    <property type="evidence" value="ECO:0007669"/>
    <property type="project" value="UniProtKB-KW"/>
</dbReference>
<dbReference type="GO" id="GO:0106310">
    <property type="term" value="F:protein serine kinase activity"/>
    <property type="evidence" value="ECO:0007669"/>
    <property type="project" value="RHEA"/>
</dbReference>
<dbReference type="GO" id="GO:0004674">
    <property type="term" value="F:protein serine/threonine kinase activity"/>
    <property type="evidence" value="ECO:0007669"/>
    <property type="project" value="UniProtKB-KW"/>
</dbReference>
<dbReference type="GO" id="GO:0008270">
    <property type="term" value="F:zinc ion binding"/>
    <property type="evidence" value="ECO:0007669"/>
    <property type="project" value="UniProtKB-KW"/>
</dbReference>
<dbReference type="GO" id="GO:0000226">
    <property type="term" value="P:microtubule cytoskeleton organization"/>
    <property type="evidence" value="ECO:0000315"/>
    <property type="project" value="MGI"/>
</dbReference>
<dbReference type="GO" id="GO:0007097">
    <property type="term" value="P:nuclear migration"/>
    <property type="evidence" value="ECO:0000315"/>
    <property type="project" value="MGI"/>
</dbReference>
<dbReference type="CDD" id="cd20864">
    <property type="entry name" value="C1_MRCKalpha"/>
    <property type="match status" value="1"/>
</dbReference>
<dbReference type="CDD" id="cd00132">
    <property type="entry name" value="CRIB"/>
    <property type="match status" value="1"/>
</dbReference>
<dbReference type="CDD" id="cd01243">
    <property type="entry name" value="PH_MRCK"/>
    <property type="match status" value="1"/>
</dbReference>
<dbReference type="CDD" id="cd05623">
    <property type="entry name" value="STKc_MRCK_alpha"/>
    <property type="match status" value="1"/>
</dbReference>
<dbReference type="FunFam" id="1.10.510.10:FF:000014">
    <property type="entry name" value="Non-specific serine/threonine protein kinase"/>
    <property type="match status" value="1"/>
</dbReference>
<dbReference type="FunFam" id="1.20.5.340:FF:000010">
    <property type="entry name" value="Non-specific serine/threonine protein kinase"/>
    <property type="match status" value="1"/>
</dbReference>
<dbReference type="FunFam" id="2.30.29.30:FF:000032">
    <property type="entry name" value="Non-specific serine/threonine protein kinase"/>
    <property type="match status" value="1"/>
</dbReference>
<dbReference type="FunFam" id="3.30.60.20:FF:000005">
    <property type="entry name" value="Non-specific serine/threonine protein kinase"/>
    <property type="match status" value="1"/>
</dbReference>
<dbReference type="FunFam" id="3.30.200.20:FF:001055">
    <property type="entry name" value="Serine/threonine-protein kinase MRCK beta"/>
    <property type="match status" value="1"/>
</dbReference>
<dbReference type="Gene3D" id="1.20.5.340">
    <property type="match status" value="1"/>
</dbReference>
<dbReference type="Gene3D" id="3.30.60.20">
    <property type="match status" value="1"/>
</dbReference>
<dbReference type="Gene3D" id="3.30.200.20">
    <property type="entry name" value="Phosphorylase Kinase, domain 1"/>
    <property type="match status" value="1"/>
</dbReference>
<dbReference type="Gene3D" id="2.30.29.30">
    <property type="entry name" value="Pleckstrin-homology domain (PH domain)/Phosphotyrosine-binding domain (PTB)"/>
    <property type="match status" value="1"/>
</dbReference>
<dbReference type="Gene3D" id="1.10.510.10">
    <property type="entry name" value="Transferase(Phosphotransferase) domain 1"/>
    <property type="match status" value="1"/>
</dbReference>
<dbReference type="InterPro" id="IPR000961">
    <property type="entry name" value="AGC-kinase_C"/>
</dbReference>
<dbReference type="InterPro" id="IPR046349">
    <property type="entry name" value="C1-like_sf"/>
</dbReference>
<dbReference type="InterPro" id="IPR001180">
    <property type="entry name" value="CNH_dom"/>
</dbReference>
<dbReference type="InterPro" id="IPR000095">
    <property type="entry name" value="CRIB_dom"/>
</dbReference>
<dbReference type="InterPro" id="IPR031597">
    <property type="entry name" value="KELK"/>
</dbReference>
<dbReference type="InterPro" id="IPR011009">
    <property type="entry name" value="Kinase-like_dom_sf"/>
</dbReference>
<dbReference type="InterPro" id="IPR026611">
    <property type="entry name" value="MRCK_alpha_cat"/>
</dbReference>
<dbReference type="InterPro" id="IPR014930">
    <property type="entry name" value="Myotonic_dystrophy_kinase_coil"/>
</dbReference>
<dbReference type="InterPro" id="IPR002219">
    <property type="entry name" value="PE/DAG-bd"/>
</dbReference>
<dbReference type="InterPro" id="IPR011993">
    <property type="entry name" value="PH-like_dom_sf"/>
</dbReference>
<dbReference type="InterPro" id="IPR001849">
    <property type="entry name" value="PH_domain"/>
</dbReference>
<dbReference type="InterPro" id="IPR017892">
    <property type="entry name" value="Pkinase_C"/>
</dbReference>
<dbReference type="InterPro" id="IPR000719">
    <property type="entry name" value="Prot_kinase_dom"/>
</dbReference>
<dbReference type="InterPro" id="IPR017441">
    <property type="entry name" value="Protein_kinase_ATP_BS"/>
</dbReference>
<dbReference type="InterPro" id="IPR050839">
    <property type="entry name" value="Rho-assoc_Ser/Thr_Kinase"/>
</dbReference>
<dbReference type="InterPro" id="IPR008271">
    <property type="entry name" value="Ser/Thr_kinase_AS"/>
</dbReference>
<dbReference type="PANTHER" id="PTHR22988">
    <property type="entry name" value="MYOTONIC DYSTROPHY S/T KINASE-RELATED"/>
    <property type="match status" value="1"/>
</dbReference>
<dbReference type="PANTHER" id="PTHR22988:SF31">
    <property type="entry name" value="SERINE_THREONINE-PROTEIN KINASE MRCK ALPHA"/>
    <property type="match status" value="1"/>
</dbReference>
<dbReference type="Pfam" id="PF00130">
    <property type="entry name" value="C1_1"/>
    <property type="match status" value="1"/>
</dbReference>
<dbReference type="Pfam" id="PF00780">
    <property type="entry name" value="CNH"/>
    <property type="match status" value="1"/>
</dbReference>
<dbReference type="Pfam" id="PF08826">
    <property type="entry name" value="DMPK_coil"/>
    <property type="match status" value="1"/>
</dbReference>
<dbReference type="Pfam" id="PF15796">
    <property type="entry name" value="KELK"/>
    <property type="match status" value="1"/>
</dbReference>
<dbReference type="Pfam" id="PF25346">
    <property type="entry name" value="PH_MRCK"/>
    <property type="match status" value="1"/>
</dbReference>
<dbReference type="Pfam" id="PF00069">
    <property type="entry name" value="Pkinase"/>
    <property type="match status" value="1"/>
</dbReference>
<dbReference type="Pfam" id="PF00433">
    <property type="entry name" value="Pkinase_C"/>
    <property type="match status" value="1"/>
</dbReference>
<dbReference type="SMART" id="SM00109">
    <property type="entry name" value="C1"/>
    <property type="match status" value="1"/>
</dbReference>
<dbReference type="SMART" id="SM00036">
    <property type="entry name" value="CNH"/>
    <property type="match status" value="1"/>
</dbReference>
<dbReference type="SMART" id="SM00285">
    <property type="entry name" value="PBD"/>
    <property type="match status" value="1"/>
</dbReference>
<dbReference type="SMART" id="SM00233">
    <property type="entry name" value="PH"/>
    <property type="match status" value="1"/>
</dbReference>
<dbReference type="SMART" id="SM00133">
    <property type="entry name" value="S_TK_X"/>
    <property type="match status" value="1"/>
</dbReference>
<dbReference type="SMART" id="SM00220">
    <property type="entry name" value="S_TKc"/>
    <property type="match status" value="1"/>
</dbReference>
<dbReference type="SUPFAM" id="SSF57889">
    <property type="entry name" value="Cysteine-rich domain"/>
    <property type="match status" value="1"/>
</dbReference>
<dbReference type="SUPFAM" id="SSF50729">
    <property type="entry name" value="PH domain-like"/>
    <property type="match status" value="1"/>
</dbReference>
<dbReference type="SUPFAM" id="SSF56112">
    <property type="entry name" value="Protein kinase-like (PK-like)"/>
    <property type="match status" value="1"/>
</dbReference>
<dbReference type="PROSITE" id="PS51285">
    <property type="entry name" value="AGC_KINASE_CTER"/>
    <property type="match status" value="1"/>
</dbReference>
<dbReference type="PROSITE" id="PS50219">
    <property type="entry name" value="CNH"/>
    <property type="match status" value="1"/>
</dbReference>
<dbReference type="PROSITE" id="PS50108">
    <property type="entry name" value="CRIB"/>
    <property type="match status" value="1"/>
</dbReference>
<dbReference type="PROSITE" id="PS50003">
    <property type="entry name" value="PH_DOMAIN"/>
    <property type="match status" value="1"/>
</dbReference>
<dbReference type="PROSITE" id="PS00107">
    <property type="entry name" value="PROTEIN_KINASE_ATP"/>
    <property type="match status" value="1"/>
</dbReference>
<dbReference type="PROSITE" id="PS50011">
    <property type="entry name" value="PROTEIN_KINASE_DOM"/>
    <property type="match status" value="1"/>
</dbReference>
<dbReference type="PROSITE" id="PS00108">
    <property type="entry name" value="PROTEIN_KINASE_ST"/>
    <property type="match status" value="1"/>
</dbReference>
<dbReference type="PROSITE" id="PS00479">
    <property type="entry name" value="ZF_DAG_PE_1"/>
    <property type="match status" value="1"/>
</dbReference>
<dbReference type="PROSITE" id="PS50081">
    <property type="entry name" value="ZF_DAG_PE_2"/>
    <property type="match status" value="1"/>
</dbReference>
<keyword id="KW-0025">Alternative splicing</keyword>
<keyword id="KW-0067">ATP-binding</keyword>
<keyword id="KW-0966">Cell projection</keyword>
<keyword id="KW-0175">Coiled coil</keyword>
<keyword id="KW-0963">Cytoplasm</keyword>
<keyword id="KW-0418">Kinase</keyword>
<keyword id="KW-0479">Metal-binding</keyword>
<keyword id="KW-0547">Nucleotide-binding</keyword>
<keyword id="KW-0597">Phosphoprotein</keyword>
<keyword id="KW-1185">Reference proteome</keyword>
<keyword id="KW-0723">Serine/threonine-protein kinase</keyword>
<keyword id="KW-0808">Transferase</keyword>
<keyword id="KW-0862">Zinc</keyword>
<keyword id="KW-0863">Zinc-finger</keyword>
<gene>
    <name type="primary">Cdc42bpa</name>
    <name type="synonym">Kiaa0451</name>
</gene>
<sequence>MSGEVRLRQLEQFILDGPAQTNGQCFSVETLLDILICLYDECNNSPLRREKNILEYLEWAKPFTSKVKQMRLHREDFEILKVIGRGAFGEVAVVKLKNADKVFAMKILNKWEMLKRAETACFREERDVLVNGDSKWITTLHYAFQDDNNLYLVMDYYVGGDLLTLLSKFEDRLPEEMARFYLAEMVIAIDSVHQLHYVHRDIKPDNILMDMNGHIRLADFGSCLKLMEDGTVQSSVAVGTPDYISPEILQAMEDGKGRYGPECDWWSLGVCMYEMLYGETPFYAESLVETYGKIMNHKERFQFPAQVTDVSENAKDLIRRLICSREHRLGQNGIEDFKKHPFFSGIDWDNIRNCEAPYIPEVSSPTDTSNFDVDDDCLKNSETMPPPTHTAFSGHHLPFVGFTYTSSCVLSDRSCLRVTAGPTSLDLDVSVQRTLDNNLATEAYERRIKRLEQEKLELTRKLQESTQTVQALQYSTVDGPLTASKDLEIKSLKEEIEKLRKQVAEVNHLEQQLEEANSVRRELDDAFRQIKASEKQIKTLQQEREELNKELVQASERLKNQSKELKDAHCQRKLAMQEFMEINERLTELHTQKQKLARHVRDKEEEVDLVMQKAESLRQELRRAERAKKELEVHTEALIAEASKDKKLREQSEHYSKQLENELEGLKQKQISYSPGICSIEHQQEITKLKTDLEKKSIFYEEEISKREGIHASEIKNLKKELHDSEGQQLALNKEILVLKDKLEKTRRESQSEREEFENEFKQQYEREKVLLTEENKKLTSELDKLTSLYESLSLRNQHLEEEVKDLADKKESVAHWEAQITEIIQWVSDEKDARGYLQALASKMTEELEALRNSSLGTRATDMPWKMRRFAKLDMSARLELQSALDAEIRAKQAIQEELNKVKASNILTECKLKDSEKKNLELLSEIEQLIKDTEELRSEKGIEHQDSQHSFLAFLNTPTDALDQFEIADCAPLPAHTPTLRKKGCPASTGFPPKRKTHQFFVKSFTAPTKCHQCTSLMVGLIRQGCSCEVCGFSCHITCVNKAPTVCPVPPEQTKGPLGIDPQKGVGTAYEGHVRIPKPAGVKKGWQRALAVVCDFKLFLYDIAEGKASQPTSVISQVIDMRDEEFSVSSVLASDVIHASRKDIPCIFRVTASQLSAPSNKCSILMLADSENERSKWVGVLSELHKILKKNKFRDRSVYVPKEAYDSTLPLIKTTQAAAIIDHERIALGNEEGLFVVHVTKDEIVRVGDNKKIHQIELIPSDQLVAVISGRNRHVRLFPMSALDGRETDFYKLAETKGCQTIAAGKVRHGALSCLCVAMKRQVLCYELFQSKTRHRKFKEIQVPCNVQWMAIFSEHLCVGFQSGFLRYPLNGEGGPCNMLHSNDHTLSFISHQPMDALCAVEISNKEYLLCFNSIGIYTDCQGRRSRQQELMWPANPSSCCYNAPYLSVYSENAVDIFDVNSMEWIQTLPLKKVRPLNTEGSLNLLGLETIRLIYFKNKMAEGDELVVPETSDNSRKQMVRNINNKRRYSFRVPEEERMQQRREMLRDPEMRNKLISNPTNFNHIAHMGPGDGIQILKDLPMNPRPQESRTVFSGSVSIPSITKSRPEPGRSMSASSGLSARSSAQNGSALKREFSGGSYNTKRQPMPSPSEGSLSSGGMDQGSDAPARDYDGEDSDSPRHSTASNSSNLSSPPSPISPQKTKSLSLESTDRGSWDP</sequence>
<protein>
    <recommendedName>
        <fullName>Serine/threonine-protein kinase MRCK alpha</fullName>
        <ecNumber>2.7.11.1</ecNumber>
    </recommendedName>
    <alternativeName>
        <fullName>CDC42-binding protein kinase alpha</fullName>
    </alternativeName>
</protein>
<feature type="chain" id="PRO_0000280455" description="Serine/threonine-protein kinase MRCK alpha">
    <location>
        <begin position="1"/>
        <end position="1719"/>
    </location>
</feature>
<feature type="domain" description="Protein kinase" evidence="7">
    <location>
        <begin position="77"/>
        <end position="343"/>
    </location>
</feature>
<feature type="domain" description="AGC-kinase C-terminal" evidence="9">
    <location>
        <begin position="344"/>
        <end position="414"/>
    </location>
</feature>
<feature type="domain" description="PH" evidence="6">
    <location>
        <begin position="1069"/>
        <end position="1188"/>
    </location>
</feature>
<feature type="domain" description="CNH" evidence="10">
    <location>
        <begin position="1214"/>
        <end position="1486"/>
    </location>
</feature>
<feature type="domain" description="CRIB" evidence="5">
    <location>
        <begin position="1558"/>
        <end position="1571"/>
    </location>
</feature>
<feature type="zinc finger region" description="Phorbol-ester/DAG-type" evidence="8">
    <location>
        <begin position="999"/>
        <end position="1049"/>
    </location>
</feature>
<feature type="region of interest" description="Disordered" evidence="12">
    <location>
        <begin position="1579"/>
        <end position="1719"/>
    </location>
</feature>
<feature type="coiled-coil region" evidence="4">
    <location>
        <begin position="437"/>
        <end position="670"/>
    </location>
</feature>
<feature type="coiled-coil region" evidence="4">
    <location>
        <begin position="713"/>
        <end position="820"/>
    </location>
</feature>
<feature type="coiled-coil region" evidence="4">
    <location>
        <begin position="880"/>
        <end position="943"/>
    </location>
</feature>
<feature type="compositionally biased region" description="Polar residues" evidence="12">
    <location>
        <begin position="1591"/>
        <end position="1606"/>
    </location>
</feature>
<feature type="compositionally biased region" description="Low complexity" evidence="12">
    <location>
        <begin position="1612"/>
        <end position="1627"/>
    </location>
</feature>
<feature type="compositionally biased region" description="Low complexity" evidence="12">
    <location>
        <begin position="1652"/>
        <end position="1661"/>
    </location>
</feature>
<feature type="active site" description="Proton acceptor" evidence="7 11">
    <location>
        <position position="201"/>
    </location>
</feature>
<feature type="binding site" evidence="7">
    <location>
        <begin position="83"/>
        <end position="91"/>
    </location>
    <ligand>
        <name>ATP</name>
        <dbReference type="ChEBI" id="CHEBI:30616"/>
    </ligand>
</feature>
<feature type="binding site" evidence="7">
    <location>
        <position position="106"/>
    </location>
    <ligand>
        <name>ATP</name>
        <dbReference type="ChEBI" id="CHEBI:30616"/>
    </ligand>
</feature>
<feature type="site" description="Cleavage; by CASP3 in vitro" evidence="3">
    <location>
        <begin position="478"/>
        <end position="479"/>
    </location>
</feature>
<feature type="modified residue" description="Phosphoserine; by autocatalysis" evidence="3">
    <location>
        <position position="222"/>
    </location>
</feature>
<feature type="modified residue" description="Phosphoserine; by autocatalysis" evidence="3">
    <location>
        <position position="234"/>
    </location>
</feature>
<feature type="modified residue" description="Phosphothreonine; by autocatalysis" evidence="3">
    <location>
        <position position="240"/>
    </location>
</feature>
<feature type="modified residue" description="Phosphoserine" evidence="3">
    <location>
        <position position="1532"/>
    </location>
</feature>
<feature type="modified residue" description="Phosphoserine" evidence="3">
    <location>
        <position position="1598"/>
    </location>
</feature>
<feature type="modified residue" description="Phosphoserine" evidence="3">
    <location>
        <position position="1600"/>
    </location>
</feature>
<feature type="modified residue" description="Phosphoserine" evidence="3">
    <location>
        <position position="1616"/>
    </location>
</feature>
<feature type="modified residue" description="Phosphoserine" evidence="3">
    <location>
        <position position="1638"/>
    </location>
</feature>
<feature type="modified residue" description="Phosphoserine" evidence="3">
    <location>
        <position position="1651"/>
    </location>
</feature>
<feature type="modified residue" description="Phosphoserine" evidence="3">
    <location>
        <position position="1656"/>
    </location>
</feature>
<feature type="modified residue" description="Phosphoserine" evidence="3">
    <location>
        <position position="1680"/>
    </location>
</feature>
<feature type="modified residue" description="Phosphoserine" evidence="3">
    <location>
        <position position="1706"/>
    </location>
</feature>
<feature type="modified residue" description="Phosphoserine" evidence="3">
    <location>
        <position position="1708"/>
    </location>
</feature>
<feature type="splice variant" id="VSP_023679" description="In isoform 2." evidence="14">
    <location>
        <begin position="1"/>
        <end position="104"/>
    </location>
</feature>
<feature type="splice variant" id="VSP_023680" description="In isoform 2." evidence="14">
    <location>
        <begin position="550"/>
        <end position="630"/>
    </location>
</feature>
<feature type="sequence conflict" description="In Ref. 2; AAH96679." evidence="15" ref="2">
    <original>VYS</original>
    <variation>HEG</variation>
    <location>
        <begin position="1451"/>
        <end position="1453"/>
    </location>
</feature>
<feature type="sequence conflict" description="In Ref. 2; AAH96679." evidence="15" ref="2">
    <original>V</original>
    <variation>F</variation>
    <location>
        <position position="1535"/>
    </location>
</feature>
<feature type="sequence conflict" description="In Ref. 5; BAC97958." evidence="15" ref="5">
    <original>G</original>
    <variation>V</variation>
    <location>
        <position position="1612"/>
    </location>
</feature>
<reference key="1">
    <citation type="journal article" date="2009" name="PLoS Biol.">
        <title>Lineage-specific biology revealed by a finished genome assembly of the mouse.</title>
        <authorList>
            <person name="Church D.M."/>
            <person name="Goodstadt L."/>
            <person name="Hillier L.W."/>
            <person name="Zody M.C."/>
            <person name="Goldstein S."/>
            <person name="She X."/>
            <person name="Bult C.J."/>
            <person name="Agarwala R."/>
            <person name="Cherry J.L."/>
            <person name="DiCuccio M."/>
            <person name="Hlavina W."/>
            <person name="Kapustin Y."/>
            <person name="Meric P."/>
            <person name="Maglott D."/>
            <person name="Birtle Z."/>
            <person name="Marques A.C."/>
            <person name="Graves T."/>
            <person name="Zhou S."/>
            <person name="Teague B."/>
            <person name="Potamousis K."/>
            <person name="Churas C."/>
            <person name="Place M."/>
            <person name="Herschleb J."/>
            <person name="Runnheim R."/>
            <person name="Forrest D."/>
            <person name="Amos-Landgraf J."/>
            <person name="Schwartz D.C."/>
            <person name="Cheng Z."/>
            <person name="Lindblad-Toh K."/>
            <person name="Eichler E.E."/>
            <person name="Ponting C.P."/>
        </authorList>
    </citation>
    <scope>NUCLEOTIDE SEQUENCE [LARGE SCALE GENOMIC DNA]</scope>
    <source>
        <strain>C57BL/6J</strain>
    </source>
</reference>
<reference key="2">
    <citation type="journal article" date="2004" name="Genome Res.">
        <title>The status, quality, and expansion of the NIH full-length cDNA project: the Mammalian Gene Collection (MGC).</title>
        <authorList>
            <consortium name="The MGC Project Team"/>
        </authorList>
    </citation>
    <scope>NUCLEOTIDE SEQUENCE [LARGE SCALE MRNA] (ISOFORM 1)</scope>
    <scope>NUCLEOTIDE SEQUENCE [LARGE SCALE MRNA] OF 1451-1719</scope>
    <source>
        <strain>C57BL/6J</strain>
        <tissue>Brain</tissue>
        <tissue>Mammary gland</tissue>
    </source>
</reference>
<reference key="3">
    <citation type="journal article" date="2005" name="Science">
        <title>The transcriptional landscape of the mammalian genome.</title>
        <authorList>
            <person name="Carninci P."/>
            <person name="Kasukawa T."/>
            <person name="Katayama S."/>
            <person name="Gough J."/>
            <person name="Frith M.C."/>
            <person name="Maeda N."/>
            <person name="Oyama R."/>
            <person name="Ravasi T."/>
            <person name="Lenhard B."/>
            <person name="Wells C."/>
            <person name="Kodzius R."/>
            <person name="Shimokawa K."/>
            <person name="Bajic V.B."/>
            <person name="Brenner S.E."/>
            <person name="Batalov S."/>
            <person name="Forrest A.R."/>
            <person name="Zavolan M."/>
            <person name="Davis M.J."/>
            <person name="Wilming L.G."/>
            <person name="Aidinis V."/>
            <person name="Allen J.E."/>
            <person name="Ambesi-Impiombato A."/>
            <person name="Apweiler R."/>
            <person name="Aturaliya R.N."/>
            <person name="Bailey T.L."/>
            <person name="Bansal M."/>
            <person name="Baxter L."/>
            <person name="Beisel K.W."/>
            <person name="Bersano T."/>
            <person name="Bono H."/>
            <person name="Chalk A.M."/>
            <person name="Chiu K.P."/>
            <person name="Choudhary V."/>
            <person name="Christoffels A."/>
            <person name="Clutterbuck D.R."/>
            <person name="Crowe M.L."/>
            <person name="Dalla E."/>
            <person name="Dalrymple B.P."/>
            <person name="de Bono B."/>
            <person name="Della Gatta G."/>
            <person name="di Bernardo D."/>
            <person name="Down T."/>
            <person name="Engstrom P."/>
            <person name="Fagiolini M."/>
            <person name="Faulkner G."/>
            <person name="Fletcher C.F."/>
            <person name="Fukushima T."/>
            <person name="Furuno M."/>
            <person name="Futaki S."/>
            <person name="Gariboldi M."/>
            <person name="Georgii-Hemming P."/>
            <person name="Gingeras T.R."/>
            <person name="Gojobori T."/>
            <person name="Green R.E."/>
            <person name="Gustincich S."/>
            <person name="Harbers M."/>
            <person name="Hayashi Y."/>
            <person name="Hensch T.K."/>
            <person name="Hirokawa N."/>
            <person name="Hill D."/>
            <person name="Huminiecki L."/>
            <person name="Iacono M."/>
            <person name="Ikeo K."/>
            <person name="Iwama A."/>
            <person name="Ishikawa T."/>
            <person name="Jakt M."/>
            <person name="Kanapin A."/>
            <person name="Katoh M."/>
            <person name="Kawasawa Y."/>
            <person name="Kelso J."/>
            <person name="Kitamura H."/>
            <person name="Kitano H."/>
            <person name="Kollias G."/>
            <person name="Krishnan S.P."/>
            <person name="Kruger A."/>
            <person name="Kummerfeld S.K."/>
            <person name="Kurochkin I.V."/>
            <person name="Lareau L.F."/>
            <person name="Lazarevic D."/>
            <person name="Lipovich L."/>
            <person name="Liu J."/>
            <person name="Liuni S."/>
            <person name="McWilliam S."/>
            <person name="Madan Babu M."/>
            <person name="Madera M."/>
            <person name="Marchionni L."/>
            <person name="Matsuda H."/>
            <person name="Matsuzawa S."/>
            <person name="Miki H."/>
            <person name="Mignone F."/>
            <person name="Miyake S."/>
            <person name="Morris K."/>
            <person name="Mottagui-Tabar S."/>
            <person name="Mulder N."/>
            <person name="Nakano N."/>
            <person name="Nakauchi H."/>
            <person name="Ng P."/>
            <person name="Nilsson R."/>
            <person name="Nishiguchi S."/>
            <person name="Nishikawa S."/>
            <person name="Nori F."/>
            <person name="Ohara O."/>
            <person name="Okazaki Y."/>
            <person name="Orlando V."/>
            <person name="Pang K.C."/>
            <person name="Pavan W.J."/>
            <person name="Pavesi G."/>
            <person name="Pesole G."/>
            <person name="Petrovsky N."/>
            <person name="Piazza S."/>
            <person name="Reed J."/>
            <person name="Reid J.F."/>
            <person name="Ring B.Z."/>
            <person name="Ringwald M."/>
            <person name="Rost B."/>
            <person name="Ruan Y."/>
            <person name="Salzberg S.L."/>
            <person name="Sandelin A."/>
            <person name="Schneider C."/>
            <person name="Schoenbach C."/>
            <person name="Sekiguchi K."/>
            <person name="Semple C.A."/>
            <person name="Seno S."/>
            <person name="Sessa L."/>
            <person name="Sheng Y."/>
            <person name="Shibata Y."/>
            <person name="Shimada H."/>
            <person name="Shimada K."/>
            <person name="Silva D."/>
            <person name="Sinclair B."/>
            <person name="Sperling S."/>
            <person name="Stupka E."/>
            <person name="Sugiura K."/>
            <person name="Sultana R."/>
            <person name="Takenaka Y."/>
            <person name="Taki K."/>
            <person name="Tammoja K."/>
            <person name="Tan S.L."/>
            <person name="Tang S."/>
            <person name="Taylor M.S."/>
            <person name="Tegner J."/>
            <person name="Teichmann S.A."/>
            <person name="Ueda H.R."/>
            <person name="van Nimwegen E."/>
            <person name="Verardo R."/>
            <person name="Wei C.L."/>
            <person name="Yagi K."/>
            <person name="Yamanishi H."/>
            <person name="Zabarovsky E."/>
            <person name="Zhu S."/>
            <person name="Zimmer A."/>
            <person name="Hide W."/>
            <person name="Bult C."/>
            <person name="Grimmond S.M."/>
            <person name="Teasdale R.D."/>
            <person name="Liu E.T."/>
            <person name="Brusic V."/>
            <person name="Quackenbush J."/>
            <person name="Wahlestedt C."/>
            <person name="Mattick J.S."/>
            <person name="Hume D.A."/>
            <person name="Kai C."/>
            <person name="Sasaki D."/>
            <person name="Tomaru Y."/>
            <person name="Fukuda S."/>
            <person name="Kanamori-Katayama M."/>
            <person name="Suzuki M."/>
            <person name="Aoki J."/>
            <person name="Arakawa T."/>
            <person name="Iida J."/>
            <person name="Imamura K."/>
            <person name="Itoh M."/>
            <person name="Kato T."/>
            <person name="Kawaji H."/>
            <person name="Kawagashira N."/>
            <person name="Kawashima T."/>
            <person name="Kojima M."/>
            <person name="Kondo S."/>
            <person name="Konno H."/>
            <person name="Nakano K."/>
            <person name="Ninomiya N."/>
            <person name="Nishio T."/>
            <person name="Okada M."/>
            <person name="Plessy C."/>
            <person name="Shibata K."/>
            <person name="Shiraki T."/>
            <person name="Suzuki S."/>
            <person name="Tagami M."/>
            <person name="Waki K."/>
            <person name="Watahiki A."/>
            <person name="Okamura-Oho Y."/>
            <person name="Suzuki H."/>
            <person name="Kawai J."/>
            <person name="Hayashizaki Y."/>
        </authorList>
    </citation>
    <scope>NUCLEOTIDE SEQUENCE [LARGE SCALE MRNA] OF 1-752 (ISOFORM 2)</scope>
    <source>
        <strain>C57BL/6J</strain>
        <tissue>Spinal cord</tissue>
    </source>
</reference>
<reference key="4">
    <citation type="submission" date="2002-03" db="EMBL/GenBank/DDBJ databases">
        <title>MRCK-alpha interacts with Dexras1.</title>
        <authorList>
            <person name="Behrend E.N."/>
            <person name="Kemppainen R.J."/>
        </authorList>
    </citation>
    <scope>NUCLEOTIDE SEQUENCE [MRNA] OF 736-1006</scope>
</reference>
<reference key="5">
    <citation type="journal article" date="2003" name="DNA Res.">
        <title>Prediction of the coding sequences of mouse homologues of KIAA gene: III. The complete nucleotide sequences of 500 mouse KIAA-homologous cDNAs identified by screening of terminal sequences of cDNA clones randomly sampled from size-fractionated libraries.</title>
        <authorList>
            <person name="Okazaki N."/>
            <person name="Kikuno R."/>
            <person name="Ohara R."/>
            <person name="Inamoto S."/>
            <person name="Koseki H."/>
            <person name="Hiraoka S."/>
            <person name="Saga Y."/>
            <person name="Nagase T."/>
            <person name="Ohara O."/>
            <person name="Koga H."/>
        </authorList>
    </citation>
    <scope>NUCLEOTIDE SEQUENCE [LARGE SCALE MRNA] OF 1376-1719</scope>
    <source>
        <tissue>Brain</tissue>
    </source>
</reference>
<reference key="6">
    <citation type="journal article" date="2010" name="Cell">
        <title>A tissue-specific atlas of mouse protein phosphorylation and expression.</title>
        <authorList>
            <person name="Huttlin E.L."/>
            <person name="Jedrychowski M.P."/>
            <person name="Elias J.E."/>
            <person name="Goswami T."/>
            <person name="Rad R."/>
            <person name="Beausoleil S.A."/>
            <person name="Villen J."/>
            <person name="Haas W."/>
            <person name="Sowa M.E."/>
            <person name="Gygi S.P."/>
        </authorList>
    </citation>
    <scope>IDENTIFICATION BY MASS SPECTROMETRY [LARGE SCALE ANALYSIS]</scope>
    <source>
        <tissue>Brain</tissue>
        <tissue>Heart</tissue>
        <tissue>Kidney</tissue>
        <tissue>Lung</tissue>
        <tissue>Pancreas</tissue>
    </source>
</reference>
<reference key="7">
    <citation type="journal article" date="2014" name="J. Biol. Chem.">
        <title>Adaptor protein LRAP25 mediates myotonic dystrophy kinase-related Cdc42-binding kinase (MRCK) regulation of LIMK1 protein in lamellipodial F-actin dynamics.</title>
        <authorList>
            <person name="Lee I.C."/>
            <person name="Leung T."/>
            <person name="Tan I."/>
        </authorList>
    </citation>
    <scope>FUNCTION</scope>
    <scope>INTERACTION WITH FAM89B AND LIMK1</scope>
    <scope>SUBCELLULAR LOCATION</scope>
    <source>
        <tissue>Brain</tissue>
    </source>
</reference>
<evidence type="ECO:0000250" key="1"/>
<evidence type="ECO:0000250" key="2">
    <source>
        <dbReference type="UniProtKB" id="O54874"/>
    </source>
</evidence>
<evidence type="ECO:0000250" key="3">
    <source>
        <dbReference type="UniProtKB" id="Q5VT25"/>
    </source>
</evidence>
<evidence type="ECO:0000255" key="4"/>
<evidence type="ECO:0000255" key="5">
    <source>
        <dbReference type="PROSITE-ProRule" id="PRU00057"/>
    </source>
</evidence>
<evidence type="ECO:0000255" key="6">
    <source>
        <dbReference type="PROSITE-ProRule" id="PRU00145"/>
    </source>
</evidence>
<evidence type="ECO:0000255" key="7">
    <source>
        <dbReference type="PROSITE-ProRule" id="PRU00159"/>
    </source>
</evidence>
<evidence type="ECO:0000255" key="8">
    <source>
        <dbReference type="PROSITE-ProRule" id="PRU00226"/>
    </source>
</evidence>
<evidence type="ECO:0000255" key="9">
    <source>
        <dbReference type="PROSITE-ProRule" id="PRU00618"/>
    </source>
</evidence>
<evidence type="ECO:0000255" key="10">
    <source>
        <dbReference type="PROSITE-ProRule" id="PRU00795"/>
    </source>
</evidence>
<evidence type="ECO:0000255" key="11">
    <source>
        <dbReference type="PROSITE-ProRule" id="PRU10027"/>
    </source>
</evidence>
<evidence type="ECO:0000256" key="12">
    <source>
        <dbReference type="SAM" id="MobiDB-lite"/>
    </source>
</evidence>
<evidence type="ECO:0000269" key="13">
    <source>
    </source>
</evidence>
<evidence type="ECO:0000303" key="14">
    <source>
    </source>
</evidence>
<evidence type="ECO:0000305" key="15"/>
<organism>
    <name type="scientific">Mus musculus</name>
    <name type="common">Mouse</name>
    <dbReference type="NCBI Taxonomy" id="10090"/>
    <lineage>
        <taxon>Eukaryota</taxon>
        <taxon>Metazoa</taxon>
        <taxon>Chordata</taxon>
        <taxon>Craniata</taxon>
        <taxon>Vertebrata</taxon>
        <taxon>Euteleostomi</taxon>
        <taxon>Mammalia</taxon>
        <taxon>Eutheria</taxon>
        <taxon>Euarchontoglires</taxon>
        <taxon>Glires</taxon>
        <taxon>Rodentia</taxon>
        <taxon>Myomorpha</taxon>
        <taxon>Muroidea</taxon>
        <taxon>Muridae</taxon>
        <taxon>Murinae</taxon>
        <taxon>Mus</taxon>
        <taxon>Mus</taxon>
    </lineage>
</organism>